<name>Y1666_ARATH</name>
<proteinExistence type="evidence at transcript level"/>
<reference key="1">
    <citation type="journal article" date="2000" name="Nature">
        <title>Sequence and analysis of chromosome 1 of the plant Arabidopsis thaliana.</title>
        <authorList>
            <person name="Theologis A."/>
            <person name="Ecker J.R."/>
            <person name="Palm C.J."/>
            <person name="Federspiel N.A."/>
            <person name="Kaul S."/>
            <person name="White O."/>
            <person name="Alonso J."/>
            <person name="Altafi H."/>
            <person name="Araujo R."/>
            <person name="Bowman C.L."/>
            <person name="Brooks S.Y."/>
            <person name="Buehler E."/>
            <person name="Chan A."/>
            <person name="Chao Q."/>
            <person name="Chen H."/>
            <person name="Cheuk R.F."/>
            <person name="Chin C.W."/>
            <person name="Chung M.K."/>
            <person name="Conn L."/>
            <person name="Conway A.B."/>
            <person name="Conway A.R."/>
            <person name="Creasy T.H."/>
            <person name="Dewar K."/>
            <person name="Dunn P."/>
            <person name="Etgu P."/>
            <person name="Feldblyum T.V."/>
            <person name="Feng J.-D."/>
            <person name="Fong B."/>
            <person name="Fujii C.Y."/>
            <person name="Gill J.E."/>
            <person name="Goldsmith A.D."/>
            <person name="Haas B."/>
            <person name="Hansen N.F."/>
            <person name="Hughes B."/>
            <person name="Huizar L."/>
            <person name="Hunter J.L."/>
            <person name="Jenkins J."/>
            <person name="Johnson-Hopson C."/>
            <person name="Khan S."/>
            <person name="Khaykin E."/>
            <person name="Kim C.J."/>
            <person name="Koo H.L."/>
            <person name="Kremenetskaia I."/>
            <person name="Kurtz D.B."/>
            <person name="Kwan A."/>
            <person name="Lam B."/>
            <person name="Langin-Hooper S."/>
            <person name="Lee A."/>
            <person name="Lee J.M."/>
            <person name="Lenz C.A."/>
            <person name="Li J.H."/>
            <person name="Li Y.-P."/>
            <person name="Lin X."/>
            <person name="Liu S.X."/>
            <person name="Liu Z.A."/>
            <person name="Luros J.S."/>
            <person name="Maiti R."/>
            <person name="Marziali A."/>
            <person name="Militscher J."/>
            <person name="Miranda M."/>
            <person name="Nguyen M."/>
            <person name="Nierman W.C."/>
            <person name="Osborne B.I."/>
            <person name="Pai G."/>
            <person name="Peterson J."/>
            <person name="Pham P.K."/>
            <person name="Rizzo M."/>
            <person name="Rooney T."/>
            <person name="Rowley D."/>
            <person name="Sakano H."/>
            <person name="Salzberg S.L."/>
            <person name="Schwartz J.R."/>
            <person name="Shinn P."/>
            <person name="Southwick A.M."/>
            <person name="Sun H."/>
            <person name="Tallon L.J."/>
            <person name="Tambunga G."/>
            <person name="Toriumi M.J."/>
            <person name="Town C.D."/>
            <person name="Utterback T."/>
            <person name="Van Aken S."/>
            <person name="Vaysberg M."/>
            <person name="Vysotskaia V.S."/>
            <person name="Walker M."/>
            <person name="Wu D."/>
            <person name="Yu G."/>
            <person name="Fraser C.M."/>
            <person name="Venter J.C."/>
            <person name="Davis R.W."/>
        </authorList>
    </citation>
    <scope>NUCLEOTIDE SEQUENCE [LARGE SCALE GENOMIC DNA]</scope>
    <source>
        <strain>cv. Columbia</strain>
    </source>
</reference>
<reference key="2">
    <citation type="journal article" date="2017" name="Plant J.">
        <title>Araport11: a complete reannotation of the Arabidopsis thaliana reference genome.</title>
        <authorList>
            <person name="Cheng C.Y."/>
            <person name="Krishnakumar V."/>
            <person name="Chan A.P."/>
            <person name="Thibaud-Nissen F."/>
            <person name="Schobel S."/>
            <person name="Town C.D."/>
        </authorList>
    </citation>
    <scope>GENOME REANNOTATION</scope>
    <source>
        <strain>cv. Columbia</strain>
    </source>
</reference>
<reference key="3">
    <citation type="journal article" date="2002" name="Science">
        <title>Functional annotation of a full-length Arabidopsis cDNA collection.</title>
        <authorList>
            <person name="Seki M."/>
            <person name="Narusaka M."/>
            <person name="Kamiya A."/>
            <person name="Ishida J."/>
            <person name="Satou M."/>
            <person name="Sakurai T."/>
            <person name="Nakajima M."/>
            <person name="Enju A."/>
            <person name="Akiyama K."/>
            <person name="Oono Y."/>
            <person name="Muramatsu M."/>
            <person name="Hayashizaki Y."/>
            <person name="Kawai J."/>
            <person name="Carninci P."/>
            <person name="Itoh M."/>
            <person name="Ishii Y."/>
            <person name="Arakawa T."/>
            <person name="Shibata K."/>
            <person name="Shinagawa A."/>
            <person name="Shinozaki K."/>
        </authorList>
    </citation>
    <scope>NUCLEOTIDE SEQUENCE [LARGE SCALE MRNA]</scope>
    <source>
        <strain>cv. Columbia</strain>
    </source>
</reference>
<reference key="4">
    <citation type="journal article" date="2003" name="Science">
        <title>Empirical analysis of transcriptional activity in the Arabidopsis genome.</title>
        <authorList>
            <person name="Yamada K."/>
            <person name="Lim J."/>
            <person name="Dale J.M."/>
            <person name="Chen H."/>
            <person name="Shinn P."/>
            <person name="Palm C.J."/>
            <person name="Southwick A.M."/>
            <person name="Wu H.C."/>
            <person name="Kim C.J."/>
            <person name="Nguyen M."/>
            <person name="Pham P.K."/>
            <person name="Cheuk R.F."/>
            <person name="Karlin-Newmann G."/>
            <person name="Liu S.X."/>
            <person name="Lam B."/>
            <person name="Sakano H."/>
            <person name="Wu T."/>
            <person name="Yu G."/>
            <person name="Miranda M."/>
            <person name="Quach H.L."/>
            <person name="Tripp M."/>
            <person name="Chang C.H."/>
            <person name="Lee J.M."/>
            <person name="Toriumi M.J."/>
            <person name="Chan M.M."/>
            <person name="Tang C.C."/>
            <person name="Onodera C.S."/>
            <person name="Deng J.M."/>
            <person name="Akiyama K."/>
            <person name="Ansari Y."/>
            <person name="Arakawa T."/>
            <person name="Banh J."/>
            <person name="Banno F."/>
            <person name="Bowser L."/>
            <person name="Brooks S.Y."/>
            <person name="Carninci P."/>
            <person name="Chao Q."/>
            <person name="Choy N."/>
            <person name="Enju A."/>
            <person name="Goldsmith A.D."/>
            <person name="Gurjal M."/>
            <person name="Hansen N.F."/>
            <person name="Hayashizaki Y."/>
            <person name="Johnson-Hopson C."/>
            <person name="Hsuan V.W."/>
            <person name="Iida K."/>
            <person name="Karnes M."/>
            <person name="Khan S."/>
            <person name="Koesema E."/>
            <person name="Ishida J."/>
            <person name="Jiang P.X."/>
            <person name="Jones T."/>
            <person name="Kawai J."/>
            <person name="Kamiya A."/>
            <person name="Meyers C."/>
            <person name="Nakajima M."/>
            <person name="Narusaka M."/>
            <person name="Seki M."/>
            <person name="Sakurai T."/>
            <person name="Satou M."/>
            <person name="Tamse R."/>
            <person name="Vaysberg M."/>
            <person name="Wallender E.K."/>
            <person name="Wong C."/>
            <person name="Yamamura Y."/>
            <person name="Yuan S."/>
            <person name="Shinozaki K."/>
            <person name="Davis R.W."/>
            <person name="Theologis A."/>
            <person name="Ecker J.R."/>
        </authorList>
    </citation>
    <scope>NUCLEOTIDE SEQUENCE [LARGE SCALE MRNA]</scope>
    <source>
        <strain>cv. Columbia</strain>
    </source>
</reference>
<protein>
    <recommendedName>
        <fullName>Uncharacterized protein At1g76660</fullName>
    </recommendedName>
</protein>
<dbReference type="EMBL" id="AC010718">
    <property type="protein sequence ID" value="AAF04432.1"/>
    <property type="molecule type" value="Genomic_DNA"/>
</dbReference>
<dbReference type="EMBL" id="CP002684">
    <property type="protein sequence ID" value="AEE35872.1"/>
    <property type="molecule type" value="Genomic_DNA"/>
</dbReference>
<dbReference type="EMBL" id="AK117141">
    <property type="protein sequence ID" value="BAC41819.1"/>
    <property type="molecule type" value="mRNA"/>
</dbReference>
<dbReference type="EMBL" id="BT005378">
    <property type="protein sequence ID" value="AAO63442.1"/>
    <property type="molecule type" value="mRNA"/>
</dbReference>
<dbReference type="PIR" id="H96794">
    <property type="entry name" value="H96794"/>
</dbReference>
<dbReference type="RefSeq" id="NP_177792.1">
    <property type="nucleotide sequence ID" value="NM_106316.5"/>
</dbReference>
<dbReference type="BioGRID" id="29218">
    <property type="interactions" value="1"/>
</dbReference>
<dbReference type="FunCoup" id="Q9SRE5">
    <property type="interactions" value="2256"/>
</dbReference>
<dbReference type="STRING" id="3702.Q9SRE5"/>
<dbReference type="iPTMnet" id="Q9SRE5"/>
<dbReference type="SwissPalm" id="Q9SRE5"/>
<dbReference type="PaxDb" id="3702-AT1G76660.1"/>
<dbReference type="ProteomicsDB" id="242443"/>
<dbReference type="EnsemblPlants" id="AT1G76660.1">
    <property type="protein sequence ID" value="AT1G76660.1"/>
    <property type="gene ID" value="AT1G76660"/>
</dbReference>
<dbReference type="GeneID" id="843999"/>
<dbReference type="Gramene" id="AT1G76660.1">
    <property type="protein sequence ID" value="AT1G76660.1"/>
    <property type="gene ID" value="AT1G76660"/>
</dbReference>
<dbReference type="KEGG" id="ath:AT1G76660"/>
<dbReference type="Araport" id="AT1G76660"/>
<dbReference type="TAIR" id="AT1G76660"/>
<dbReference type="eggNOG" id="ENOG502QWA4">
    <property type="taxonomic scope" value="Eukaryota"/>
</dbReference>
<dbReference type="HOGENOM" id="CLU_028370_1_0_1"/>
<dbReference type="InParanoid" id="Q9SRE5"/>
<dbReference type="OMA" id="DSSFFCP"/>
<dbReference type="OrthoDB" id="1927968at2759"/>
<dbReference type="PhylomeDB" id="Q9SRE5"/>
<dbReference type="PRO" id="PR:Q9SRE5"/>
<dbReference type="Proteomes" id="UP000006548">
    <property type="component" value="Chromosome 1"/>
</dbReference>
<dbReference type="ExpressionAtlas" id="Q9SRE5">
    <property type="expression patterns" value="baseline and differential"/>
</dbReference>
<dbReference type="InterPro" id="IPR040420">
    <property type="entry name" value="At1g76660-like"/>
</dbReference>
<dbReference type="PANTHER" id="PTHR31798">
    <property type="entry name" value="HYDROXYPROLINE-RICH GLYCOPROTEIN-LIKE"/>
    <property type="match status" value="1"/>
</dbReference>
<dbReference type="PANTHER" id="PTHR31798:SF3">
    <property type="entry name" value="OS01G0103800 PROTEIN"/>
    <property type="match status" value="1"/>
</dbReference>
<feature type="chain" id="PRO_0000305188" description="Uncharacterized protein At1g76660">
    <location>
        <begin position="1"/>
        <end position="431"/>
    </location>
</feature>
<feature type="region of interest" description="Disordered" evidence="1">
    <location>
        <begin position="31"/>
        <end position="55"/>
    </location>
</feature>
<feature type="region of interest" description="Disordered" evidence="1">
    <location>
        <begin position="257"/>
        <end position="291"/>
    </location>
</feature>
<feature type="region of interest" description="Disordered" evidence="1">
    <location>
        <begin position="365"/>
        <end position="431"/>
    </location>
</feature>
<feature type="compositionally biased region" description="Polar residues" evidence="1">
    <location>
        <begin position="42"/>
        <end position="55"/>
    </location>
</feature>
<feature type="compositionally biased region" description="Basic and acidic residues" evidence="1">
    <location>
        <begin position="412"/>
        <end position="425"/>
    </location>
</feature>
<sequence length="431" mass="46430">MGSEQDQRKRWGGCLGVFSCFKSQKGGKRIVPASRIPEGGNVSASQPNGAHQAGVLNNQAAGGINLSLLAPPSSPASFTNSALPSTTQSPNCYLSLAANSPGGPSSSMYATGPYAHETQLVSPPVFSTFTTEPSTAPFTPPPELARLTAPSSPDVPYARFLTSSMDLKNSGKGHYNDLQATYSLYPGSPASALRSPISRASGDGLLSPQNGKCSRSDSGNTFGYDTNGVSTPLQESNFFCPETFAKFYLDHDPSVPQNGGRLSVSKDSDVYPTNGYGNGNQNRQNRSPKQDMEELEAYRASFGFSADEIITTSQYVEITDVMDGSFNTSAYSPSDGQKLLRREANLLSQTSPKSEADLDSQVVDFQSPKSSNSYKDHKQRNRIHADEEALLSRVGSVKGSRSYHISSSDAEVEYRRGRSLRESRENRHRKA</sequence>
<accession>Q9SRE5</accession>
<organism>
    <name type="scientific">Arabidopsis thaliana</name>
    <name type="common">Mouse-ear cress</name>
    <dbReference type="NCBI Taxonomy" id="3702"/>
    <lineage>
        <taxon>Eukaryota</taxon>
        <taxon>Viridiplantae</taxon>
        <taxon>Streptophyta</taxon>
        <taxon>Embryophyta</taxon>
        <taxon>Tracheophyta</taxon>
        <taxon>Spermatophyta</taxon>
        <taxon>Magnoliopsida</taxon>
        <taxon>eudicotyledons</taxon>
        <taxon>Gunneridae</taxon>
        <taxon>Pentapetalae</taxon>
        <taxon>rosids</taxon>
        <taxon>malvids</taxon>
        <taxon>Brassicales</taxon>
        <taxon>Brassicaceae</taxon>
        <taxon>Camelineae</taxon>
        <taxon>Arabidopsis</taxon>
    </lineage>
</organism>
<keyword id="KW-1185">Reference proteome</keyword>
<gene>
    <name type="ordered locus">At1g76660</name>
    <name type="ORF">F28O16.3</name>
</gene>
<evidence type="ECO:0000256" key="1">
    <source>
        <dbReference type="SAM" id="MobiDB-lite"/>
    </source>
</evidence>